<keyword id="KW-0028">Amino-acid biosynthesis</keyword>
<keyword id="KW-0032">Aminotransferase</keyword>
<keyword id="KW-0368">Histidine biosynthesis</keyword>
<keyword id="KW-0663">Pyridoxal phosphate</keyword>
<keyword id="KW-1185">Reference proteome</keyword>
<keyword id="KW-0808">Transferase</keyword>
<feature type="chain" id="PRO_1000063484" description="Histidinol-phosphate aminotransferase">
    <location>
        <begin position="1"/>
        <end position="379"/>
    </location>
</feature>
<feature type="modified residue" description="N6-(pyridoxal phosphate)lysine" evidence="1">
    <location>
        <position position="231"/>
    </location>
</feature>
<reference key="1">
    <citation type="submission" date="2006-10" db="EMBL/GenBank/DDBJ databases">
        <authorList>
            <person name="Fleischmann R.D."/>
            <person name="Dodson R.J."/>
            <person name="Haft D.H."/>
            <person name="Merkel J.S."/>
            <person name="Nelson W.C."/>
            <person name="Fraser C.M."/>
        </authorList>
    </citation>
    <scope>NUCLEOTIDE SEQUENCE [LARGE SCALE GENOMIC DNA]</scope>
    <source>
        <strain>ATCC 700084 / mc(2)155</strain>
    </source>
</reference>
<reference key="2">
    <citation type="journal article" date="2007" name="Genome Biol.">
        <title>Interrupted coding sequences in Mycobacterium smegmatis: authentic mutations or sequencing errors?</title>
        <authorList>
            <person name="Deshayes C."/>
            <person name="Perrodou E."/>
            <person name="Gallien S."/>
            <person name="Euphrasie D."/>
            <person name="Schaeffer C."/>
            <person name="Van-Dorsselaer A."/>
            <person name="Poch O."/>
            <person name="Lecompte O."/>
            <person name="Reyrat J.-M."/>
        </authorList>
    </citation>
    <scope>NUCLEOTIDE SEQUENCE [LARGE SCALE GENOMIC DNA]</scope>
    <source>
        <strain>ATCC 700084 / mc(2)155</strain>
    </source>
</reference>
<reference key="3">
    <citation type="journal article" date="2009" name="Genome Res.">
        <title>Ortho-proteogenomics: multiple proteomes investigation through orthology and a new MS-based protocol.</title>
        <authorList>
            <person name="Gallien S."/>
            <person name="Perrodou E."/>
            <person name="Carapito C."/>
            <person name="Deshayes C."/>
            <person name="Reyrat J.-M."/>
            <person name="Van Dorsselaer A."/>
            <person name="Poch O."/>
            <person name="Schaeffer C."/>
            <person name="Lecompte O."/>
        </authorList>
    </citation>
    <scope>NUCLEOTIDE SEQUENCE [LARGE SCALE GENOMIC DNA]</scope>
    <source>
        <strain>ATCC 700084 / mc(2)155</strain>
    </source>
</reference>
<name>HIS8_MYCS2</name>
<proteinExistence type="inferred from homology"/>
<organism>
    <name type="scientific">Mycolicibacterium smegmatis (strain ATCC 700084 / mc(2)155)</name>
    <name type="common">Mycobacterium smegmatis</name>
    <dbReference type="NCBI Taxonomy" id="246196"/>
    <lineage>
        <taxon>Bacteria</taxon>
        <taxon>Bacillati</taxon>
        <taxon>Actinomycetota</taxon>
        <taxon>Actinomycetes</taxon>
        <taxon>Mycobacteriales</taxon>
        <taxon>Mycobacteriaceae</taxon>
        <taxon>Mycolicibacterium</taxon>
    </lineage>
</organism>
<gene>
    <name evidence="1" type="primary">hisC</name>
    <name type="ordered locus">MSMEG_3206</name>
    <name type="ordered locus">MSMEI_3124</name>
</gene>
<evidence type="ECO:0000255" key="1">
    <source>
        <dbReference type="HAMAP-Rule" id="MF_01023"/>
    </source>
</evidence>
<protein>
    <recommendedName>
        <fullName evidence="1">Histidinol-phosphate aminotransferase</fullName>
        <ecNumber evidence="1">2.6.1.9</ecNumber>
    </recommendedName>
    <alternativeName>
        <fullName evidence="1">Imidazole acetol-phosphate transaminase</fullName>
    </alternativeName>
</protein>
<accession>A0QX82</accession>
<accession>I7FLH9</accession>
<dbReference type="EC" id="2.6.1.9" evidence="1"/>
<dbReference type="EMBL" id="CP000480">
    <property type="protein sequence ID" value="ABK73040.1"/>
    <property type="molecule type" value="Genomic_DNA"/>
</dbReference>
<dbReference type="EMBL" id="CP001663">
    <property type="protein sequence ID" value="AFP39588.1"/>
    <property type="molecule type" value="Genomic_DNA"/>
</dbReference>
<dbReference type="RefSeq" id="WP_011728896.1">
    <property type="nucleotide sequence ID" value="NZ_SIJM01000015.1"/>
</dbReference>
<dbReference type="RefSeq" id="YP_887520.1">
    <property type="nucleotide sequence ID" value="NC_008596.1"/>
</dbReference>
<dbReference type="SMR" id="A0QX82"/>
<dbReference type="STRING" id="246196.MSMEG_3206"/>
<dbReference type="PaxDb" id="246196-MSMEI_3124"/>
<dbReference type="KEGG" id="msb:LJ00_15940"/>
<dbReference type="KEGG" id="msg:MSMEI_3124"/>
<dbReference type="KEGG" id="msm:MSMEG_3206"/>
<dbReference type="PATRIC" id="fig|246196.19.peg.3168"/>
<dbReference type="eggNOG" id="COG0079">
    <property type="taxonomic scope" value="Bacteria"/>
</dbReference>
<dbReference type="OrthoDB" id="9809616at2"/>
<dbReference type="UniPathway" id="UPA00031">
    <property type="reaction ID" value="UER00012"/>
</dbReference>
<dbReference type="Proteomes" id="UP000000757">
    <property type="component" value="Chromosome"/>
</dbReference>
<dbReference type="Proteomes" id="UP000006158">
    <property type="component" value="Chromosome"/>
</dbReference>
<dbReference type="GO" id="GO:0004400">
    <property type="term" value="F:histidinol-phosphate transaminase activity"/>
    <property type="evidence" value="ECO:0007669"/>
    <property type="project" value="UniProtKB-UniRule"/>
</dbReference>
<dbReference type="GO" id="GO:0030170">
    <property type="term" value="F:pyridoxal phosphate binding"/>
    <property type="evidence" value="ECO:0007669"/>
    <property type="project" value="InterPro"/>
</dbReference>
<dbReference type="GO" id="GO:0000105">
    <property type="term" value="P:L-histidine biosynthetic process"/>
    <property type="evidence" value="ECO:0007669"/>
    <property type="project" value="UniProtKB-UniRule"/>
</dbReference>
<dbReference type="CDD" id="cd00609">
    <property type="entry name" value="AAT_like"/>
    <property type="match status" value="1"/>
</dbReference>
<dbReference type="Gene3D" id="3.90.1150.10">
    <property type="entry name" value="Aspartate Aminotransferase, domain 1"/>
    <property type="match status" value="1"/>
</dbReference>
<dbReference type="Gene3D" id="3.40.640.10">
    <property type="entry name" value="Type I PLP-dependent aspartate aminotransferase-like (Major domain)"/>
    <property type="match status" value="1"/>
</dbReference>
<dbReference type="HAMAP" id="MF_01023">
    <property type="entry name" value="HisC_aminotrans_2"/>
    <property type="match status" value="1"/>
</dbReference>
<dbReference type="InterPro" id="IPR001917">
    <property type="entry name" value="Aminotrans_II_pyridoxalP_BS"/>
</dbReference>
<dbReference type="InterPro" id="IPR004839">
    <property type="entry name" value="Aminotransferase_I/II_large"/>
</dbReference>
<dbReference type="InterPro" id="IPR005861">
    <property type="entry name" value="HisP_aminotrans"/>
</dbReference>
<dbReference type="InterPro" id="IPR015424">
    <property type="entry name" value="PyrdxlP-dep_Trfase"/>
</dbReference>
<dbReference type="InterPro" id="IPR015421">
    <property type="entry name" value="PyrdxlP-dep_Trfase_major"/>
</dbReference>
<dbReference type="InterPro" id="IPR015422">
    <property type="entry name" value="PyrdxlP-dep_Trfase_small"/>
</dbReference>
<dbReference type="NCBIfam" id="TIGR01141">
    <property type="entry name" value="hisC"/>
    <property type="match status" value="1"/>
</dbReference>
<dbReference type="NCBIfam" id="NF002877">
    <property type="entry name" value="PRK03317.1"/>
    <property type="match status" value="1"/>
</dbReference>
<dbReference type="PANTHER" id="PTHR42885:SF2">
    <property type="entry name" value="HISTIDINOL-PHOSPHATE AMINOTRANSFERASE"/>
    <property type="match status" value="1"/>
</dbReference>
<dbReference type="PANTHER" id="PTHR42885">
    <property type="entry name" value="HISTIDINOL-PHOSPHATE AMINOTRANSFERASE-RELATED"/>
    <property type="match status" value="1"/>
</dbReference>
<dbReference type="Pfam" id="PF00155">
    <property type="entry name" value="Aminotran_1_2"/>
    <property type="match status" value="1"/>
</dbReference>
<dbReference type="SUPFAM" id="SSF53383">
    <property type="entry name" value="PLP-dependent transferases"/>
    <property type="match status" value="1"/>
</dbReference>
<dbReference type="PROSITE" id="PS00599">
    <property type="entry name" value="AA_TRANSFER_CLASS_2"/>
    <property type="match status" value="1"/>
</dbReference>
<sequence length="379" mass="40227">MSADKVTLADLPLRDNLRGKSPYGAPQLQVPVRLNTNENPHPPSKALVDDVAASVREAAAELHRYPDRDAVALRTDLAAYLTAATGVRLGVENLWAANGSNEILQQLLQAFGGPGRTAIGFVPSYSMHPIISDGTQTEWLQASRAEDFGLDIDVAVSAVTERKPDVVFVTSPNNPSGQSVPLDDLRRVLDAMQGGILIVDEAYGEFSSQPSAVALLDDYPAKLVVSRTMSKAFAFAGGRLGYLAAAPAVIDALLLVRLPYHLSVLTQAAARAALRHADDTLGSVKALIAERERVSAELTRMGYRVIPSDANFVLFGAFTDAPATWQRYLDAGVLIRDVGIPGHLRVTIGLAAENDAFLAAGAELAGTELQPSTSPVGAQ</sequence>
<comment type="catalytic activity">
    <reaction evidence="1">
        <text>L-histidinol phosphate + 2-oxoglutarate = 3-(imidazol-4-yl)-2-oxopropyl phosphate + L-glutamate</text>
        <dbReference type="Rhea" id="RHEA:23744"/>
        <dbReference type="ChEBI" id="CHEBI:16810"/>
        <dbReference type="ChEBI" id="CHEBI:29985"/>
        <dbReference type="ChEBI" id="CHEBI:57766"/>
        <dbReference type="ChEBI" id="CHEBI:57980"/>
        <dbReference type="EC" id="2.6.1.9"/>
    </reaction>
</comment>
<comment type="cofactor">
    <cofactor evidence="1">
        <name>pyridoxal 5'-phosphate</name>
        <dbReference type="ChEBI" id="CHEBI:597326"/>
    </cofactor>
</comment>
<comment type="pathway">
    <text evidence="1">Amino-acid biosynthesis; L-histidine biosynthesis; L-histidine from 5-phospho-alpha-D-ribose 1-diphosphate: step 7/9.</text>
</comment>
<comment type="subunit">
    <text evidence="1">Homodimer.</text>
</comment>
<comment type="similarity">
    <text evidence="1">Belongs to the class-II pyridoxal-phosphate-dependent aminotransferase family. Histidinol-phosphate aminotransferase subfamily.</text>
</comment>